<organism>
    <name type="scientific">Enterococcus faecalis (strain ATCC 700802 / V583)</name>
    <dbReference type="NCBI Taxonomy" id="226185"/>
    <lineage>
        <taxon>Bacteria</taxon>
        <taxon>Bacillati</taxon>
        <taxon>Bacillota</taxon>
        <taxon>Bacilli</taxon>
        <taxon>Lactobacillales</taxon>
        <taxon>Enterococcaceae</taxon>
        <taxon>Enterococcus</taxon>
    </lineage>
</organism>
<feature type="chain" id="PRO_0000103113" description="4-hydroxy-tetrahydrodipicolinate synthase">
    <location>
        <begin position="1"/>
        <end position="290"/>
    </location>
</feature>
<feature type="active site" description="Proton donor/acceptor" evidence="1">
    <location>
        <position position="137"/>
    </location>
</feature>
<feature type="active site" description="Schiff-base intermediate with substrate" evidence="1">
    <location>
        <position position="165"/>
    </location>
</feature>
<feature type="binding site" evidence="1">
    <location>
        <position position="48"/>
    </location>
    <ligand>
        <name>pyruvate</name>
        <dbReference type="ChEBI" id="CHEBI:15361"/>
    </ligand>
</feature>
<feature type="binding site" evidence="1">
    <location>
        <position position="206"/>
    </location>
    <ligand>
        <name>pyruvate</name>
        <dbReference type="ChEBI" id="CHEBI:15361"/>
    </ligand>
</feature>
<feature type="site" description="Part of a proton relay during catalysis" evidence="1">
    <location>
        <position position="47"/>
    </location>
</feature>
<feature type="site" description="Part of a proton relay during catalysis" evidence="1">
    <location>
        <position position="111"/>
    </location>
</feature>
<sequence length="290" mass="31512">MDLTNATIITAMVTPFQESGEIDFDKLPQLVDYLLANHTEGVILAGTTGESPTLTHEEELQLFQRIIELIDGRIPIICGVGTNDTRDSVAFVKELATIAGIDAVLAVVPYYNKPNQEGMYQHFKTIAEASELPIILYNVPGRTAACLEVETTLRLAQLEKIVAIKECAGLDAITELIERAPKDFLVYTGEDGLAFATKALGGQGVISVASHVFGSSMYEMYQALEQGNLPEAAKIQRQLLPKMNALFSVPSPAPVKAALNHLGIPVGNLRLPLVACTPEEEQRIIRTLEI</sequence>
<gene>
    <name evidence="1" type="primary">dapA</name>
    <name type="ordered locus">EF_1184</name>
</gene>
<evidence type="ECO:0000255" key="1">
    <source>
        <dbReference type="HAMAP-Rule" id="MF_00418"/>
    </source>
</evidence>
<evidence type="ECO:0000305" key="2"/>
<reference key="1">
    <citation type="journal article" date="2003" name="Science">
        <title>Role of mobile DNA in the evolution of vancomycin-resistant Enterococcus faecalis.</title>
        <authorList>
            <person name="Paulsen I.T."/>
            <person name="Banerjei L."/>
            <person name="Myers G.S.A."/>
            <person name="Nelson K.E."/>
            <person name="Seshadri R."/>
            <person name="Read T.D."/>
            <person name="Fouts D.E."/>
            <person name="Eisen J.A."/>
            <person name="Gill S.R."/>
            <person name="Heidelberg J.F."/>
            <person name="Tettelin H."/>
            <person name="Dodson R.J."/>
            <person name="Umayam L.A."/>
            <person name="Brinkac L.M."/>
            <person name="Beanan M.J."/>
            <person name="Daugherty S.C."/>
            <person name="DeBoy R.T."/>
            <person name="Durkin S.A."/>
            <person name="Kolonay J.F."/>
            <person name="Madupu R."/>
            <person name="Nelson W.C."/>
            <person name="Vamathevan J.J."/>
            <person name="Tran B."/>
            <person name="Upton J."/>
            <person name="Hansen T."/>
            <person name="Shetty J."/>
            <person name="Khouri H.M."/>
            <person name="Utterback T.R."/>
            <person name="Radune D."/>
            <person name="Ketchum K.A."/>
            <person name="Dougherty B.A."/>
            <person name="Fraser C.M."/>
        </authorList>
    </citation>
    <scope>NUCLEOTIDE SEQUENCE [LARGE SCALE GENOMIC DNA]</scope>
    <source>
        <strain>ATCC 700802 / V583</strain>
    </source>
</reference>
<dbReference type="EC" id="4.3.3.7" evidence="1"/>
<dbReference type="EMBL" id="AE016830">
    <property type="protein sequence ID" value="AAO80983.1"/>
    <property type="molecule type" value="Genomic_DNA"/>
</dbReference>
<dbReference type="RefSeq" id="NP_814913.1">
    <property type="nucleotide sequence ID" value="NC_004668.1"/>
</dbReference>
<dbReference type="RefSeq" id="WP_002361644.1">
    <property type="nucleotide sequence ID" value="NZ_KE136528.1"/>
</dbReference>
<dbReference type="SMR" id="Q836D1"/>
<dbReference type="STRING" id="226185.EF_1184"/>
<dbReference type="EnsemblBacteria" id="AAO80983">
    <property type="protein sequence ID" value="AAO80983"/>
    <property type="gene ID" value="EF_1184"/>
</dbReference>
<dbReference type="KEGG" id="efa:EF1184"/>
<dbReference type="PATRIC" id="fig|226185.45.peg.2314"/>
<dbReference type="eggNOG" id="COG0329">
    <property type="taxonomic scope" value="Bacteria"/>
</dbReference>
<dbReference type="HOGENOM" id="CLU_049343_7_1_9"/>
<dbReference type="UniPathway" id="UPA00034">
    <property type="reaction ID" value="UER00017"/>
</dbReference>
<dbReference type="Proteomes" id="UP000001415">
    <property type="component" value="Chromosome"/>
</dbReference>
<dbReference type="GO" id="GO:0005829">
    <property type="term" value="C:cytosol"/>
    <property type="evidence" value="ECO:0007669"/>
    <property type="project" value="TreeGrafter"/>
</dbReference>
<dbReference type="GO" id="GO:0008840">
    <property type="term" value="F:4-hydroxy-tetrahydrodipicolinate synthase activity"/>
    <property type="evidence" value="ECO:0007669"/>
    <property type="project" value="UniProtKB-UniRule"/>
</dbReference>
<dbReference type="GO" id="GO:0019877">
    <property type="term" value="P:diaminopimelate biosynthetic process"/>
    <property type="evidence" value="ECO:0007669"/>
    <property type="project" value="UniProtKB-UniRule"/>
</dbReference>
<dbReference type="GO" id="GO:0009089">
    <property type="term" value="P:lysine biosynthetic process via diaminopimelate"/>
    <property type="evidence" value="ECO:0007669"/>
    <property type="project" value="UniProtKB-UniRule"/>
</dbReference>
<dbReference type="CDD" id="cd00950">
    <property type="entry name" value="DHDPS"/>
    <property type="match status" value="1"/>
</dbReference>
<dbReference type="Gene3D" id="3.20.20.70">
    <property type="entry name" value="Aldolase class I"/>
    <property type="match status" value="1"/>
</dbReference>
<dbReference type="HAMAP" id="MF_00418">
    <property type="entry name" value="DapA"/>
    <property type="match status" value="1"/>
</dbReference>
<dbReference type="InterPro" id="IPR013785">
    <property type="entry name" value="Aldolase_TIM"/>
</dbReference>
<dbReference type="InterPro" id="IPR005263">
    <property type="entry name" value="DapA"/>
</dbReference>
<dbReference type="InterPro" id="IPR002220">
    <property type="entry name" value="DapA-like"/>
</dbReference>
<dbReference type="InterPro" id="IPR020625">
    <property type="entry name" value="Schiff_base-form_aldolases_AS"/>
</dbReference>
<dbReference type="InterPro" id="IPR020624">
    <property type="entry name" value="Schiff_base-form_aldolases_CS"/>
</dbReference>
<dbReference type="NCBIfam" id="TIGR00674">
    <property type="entry name" value="dapA"/>
    <property type="match status" value="1"/>
</dbReference>
<dbReference type="PANTHER" id="PTHR12128:SF66">
    <property type="entry name" value="4-HYDROXY-2-OXOGLUTARATE ALDOLASE, MITOCHONDRIAL"/>
    <property type="match status" value="1"/>
</dbReference>
<dbReference type="PANTHER" id="PTHR12128">
    <property type="entry name" value="DIHYDRODIPICOLINATE SYNTHASE"/>
    <property type="match status" value="1"/>
</dbReference>
<dbReference type="Pfam" id="PF00701">
    <property type="entry name" value="DHDPS"/>
    <property type="match status" value="1"/>
</dbReference>
<dbReference type="PIRSF" id="PIRSF001365">
    <property type="entry name" value="DHDPS"/>
    <property type="match status" value="1"/>
</dbReference>
<dbReference type="PRINTS" id="PR00146">
    <property type="entry name" value="DHPICSNTHASE"/>
</dbReference>
<dbReference type="SMART" id="SM01130">
    <property type="entry name" value="DHDPS"/>
    <property type="match status" value="1"/>
</dbReference>
<dbReference type="SUPFAM" id="SSF51569">
    <property type="entry name" value="Aldolase"/>
    <property type="match status" value="1"/>
</dbReference>
<dbReference type="PROSITE" id="PS00665">
    <property type="entry name" value="DHDPS_1"/>
    <property type="match status" value="1"/>
</dbReference>
<dbReference type="PROSITE" id="PS00666">
    <property type="entry name" value="DHDPS_2"/>
    <property type="match status" value="1"/>
</dbReference>
<accession>Q836D1</accession>
<name>DAPA_ENTFA</name>
<keyword id="KW-0028">Amino-acid biosynthesis</keyword>
<keyword id="KW-0963">Cytoplasm</keyword>
<keyword id="KW-0220">Diaminopimelate biosynthesis</keyword>
<keyword id="KW-0456">Lyase</keyword>
<keyword id="KW-0457">Lysine biosynthesis</keyword>
<keyword id="KW-1185">Reference proteome</keyword>
<keyword id="KW-0704">Schiff base</keyword>
<protein>
    <recommendedName>
        <fullName evidence="1">4-hydroxy-tetrahydrodipicolinate synthase</fullName>
        <shortName evidence="1">HTPA synthase</shortName>
        <ecNumber evidence="1">4.3.3.7</ecNumber>
    </recommendedName>
</protein>
<proteinExistence type="inferred from homology"/>
<comment type="function">
    <text evidence="1">Catalyzes the condensation of (S)-aspartate-beta-semialdehyde [(S)-ASA] and pyruvate to 4-hydroxy-tetrahydrodipicolinate (HTPA).</text>
</comment>
<comment type="catalytic activity">
    <reaction evidence="1">
        <text>L-aspartate 4-semialdehyde + pyruvate = (2S,4S)-4-hydroxy-2,3,4,5-tetrahydrodipicolinate + H2O + H(+)</text>
        <dbReference type="Rhea" id="RHEA:34171"/>
        <dbReference type="ChEBI" id="CHEBI:15361"/>
        <dbReference type="ChEBI" id="CHEBI:15377"/>
        <dbReference type="ChEBI" id="CHEBI:15378"/>
        <dbReference type="ChEBI" id="CHEBI:67139"/>
        <dbReference type="ChEBI" id="CHEBI:537519"/>
        <dbReference type="EC" id="4.3.3.7"/>
    </reaction>
</comment>
<comment type="pathway">
    <text evidence="1">Amino-acid biosynthesis; L-lysine biosynthesis via DAP pathway; (S)-tetrahydrodipicolinate from L-aspartate: step 3/4.</text>
</comment>
<comment type="subunit">
    <text evidence="1">Homotetramer; dimer of dimers.</text>
</comment>
<comment type="subcellular location">
    <subcellularLocation>
        <location evidence="1">Cytoplasm</location>
    </subcellularLocation>
</comment>
<comment type="similarity">
    <text evidence="1">Belongs to the DapA family.</text>
</comment>
<comment type="caution">
    <text evidence="2">Was originally thought to be a dihydrodipicolinate synthase (DHDPS), catalyzing the condensation of (S)-aspartate-beta-semialdehyde [(S)-ASA] and pyruvate to dihydrodipicolinate (DHDP). However, it was shown in E.coli that the product of the enzymatic reaction is not dihydrodipicolinate but in fact (4S)-4-hydroxy-2,3,4,5-tetrahydro-(2S)-dipicolinic acid (HTPA), and that the consecutive dehydration reaction leading to DHDP is not spontaneous but catalyzed by DapB.</text>
</comment>